<reference key="1">
    <citation type="journal article" date="2003" name="Science">
        <title>A genomic view of the human-Bacteroides thetaiotaomicron symbiosis.</title>
        <authorList>
            <person name="Xu J."/>
            <person name="Bjursell M.K."/>
            <person name="Himrod J."/>
            <person name="Deng S."/>
            <person name="Carmichael L.K."/>
            <person name="Chiang H.C."/>
            <person name="Hooper L.V."/>
            <person name="Gordon J.I."/>
        </authorList>
    </citation>
    <scope>NUCLEOTIDE SEQUENCE [LARGE SCALE GENOMIC DNA]</scope>
    <source>
        <strain>ATCC 29148 / DSM 2079 / JCM 5827 / CCUG 10774 / NCTC 10582 / VPI-5482 / E50</strain>
    </source>
</reference>
<feature type="chain" id="PRO_0000156996" description="Thiamine-phosphate synthase">
    <location>
        <begin position="1"/>
        <end position="209"/>
    </location>
</feature>
<feature type="binding site" evidence="1">
    <location>
        <begin position="32"/>
        <end position="36"/>
    </location>
    <ligand>
        <name>4-amino-2-methyl-5-(diphosphooxymethyl)pyrimidine</name>
        <dbReference type="ChEBI" id="CHEBI:57841"/>
    </ligand>
</feature>
<feature type="binding site" evidence="1">
    <location>
        <position position="64"/>
    </location>
    <ligand>
        <name>4-amino-2-methyl-5-(diphosphooxymethyl)pyrimidine</name>
        <dbReference type="ChEBI" id="CHEBI:57841"/>
    </ligand>
</feature>
<feature type="binding site" evidence="1">
    <location>
        <position position="65"/>
    </location>
    <ligand>
        <name>Mg(2+)</name>
        <dbReference type="ChEBI" id="CHEBI:18420"/>
    </ligand>
</feature>
<feature type="binding site" evidence="1">
    <location>
        <position position="84"/>
    </location>
    <ligand>
        <name>Mg(2+)</name>
        <dbReference type="ChEBI" id="CHEBI:18420"/>
    </ligand>
</feature>
<feature type="binding site" evidence="1">
    <location>
        <position position="103"/>
    </location>
    <ligand>
        <name>4-amino-2-methyl-5-(diphosphooxymethyl)pyrimidine</name>
        <dbReference type="ChEBI" id="CHEBI:57841"/>
    </ligand>
</feature>
<feature type="binding site" evidence="1">
    <location>
        <begin position="129"/>
        <end position="131"/>
    </location>
    <ligand>
        <name>2-[(2R,5Z)-2-carboxy-4-methylthiazol-5(2H)-ylidene]ethyl phosphate</name>
        <dbReference type="ChEBI" id="CHEBI:62899"/>
    </ligand>
</feature>
<feature type="binding site" evidence="1">
    <location>
        <position position="132"/>
    </location>
    <ligand>
        <name>4-amino-2-methyl-5-(diphosphooxymethyl)pyrimidine</name>
        <dbReference type="ChEBI" id="CHEBI:57841"/>
    </ligand>
</feature>
<feature type="binding site" evidence="1">
    <location>
        <position position="165"/>
    </location>
    <ligand>
        <name>2-[(2R,5Z)-2-carboxy-4-methylthiazol-5(2H)-ylidene]ethyl phosphate</name>
        <dbReference type="ChEBI" id="CHEBI:62899"/>
    </ligand>
</feature>
<proteinExistence type="inferred from homology"/>
<protein>
    <recommendedName>
        <fullName evidence="1">Thiamine-phosphate synthase</fullName>
        <shortName evidence="1">TP synthase</shortName>
        <shortName evidence="1">TPS</shortName>
        <ecNumber evidence="1">2.5.1.3</ecNumber>
    </recommendedName>
    <alternativeName>
        <fullName evidence="1">Thiamine-phosphate pyrophosphorylase</fullName>
        <shortName evidence="1">TMP pyrophosphorylase</shortName>
        <shortName evidence="1">TMP-PPase</shortName>
    </alternativeName>
</protein>
<accession>Q8AA13</accession>
<name>THIE_BACTN</name>
<dbReference type="EC" id="2.5.1.3" evidence="1"/>
<dbReference type="EMBL" id="AE015928">
    <property type="protein sequence ID" value="AAO75759.1"/>
    <property type="molecule type" value="Genomic_DNA"/>
</dbReference>
<dbReference type="RefSeq" id="NP_809565.1">
    <property type="nucleotide sequence ID" value="NC_004663.1"/>
</dbReference>
<dbReference type="RefSeq" id="WP_011107374.1">
    <property type="nucleotide sequence ID" value="NC_004663.1"/>
</dbReference>
<dbReference type="SMR" id="Q8AA13"/>
<dbReference type="FunCoup" id="Q8AA13">
    <property type="interactions" value="417"/>
</dbReference>
<dbReference type="STRING" id="226186.BT_0652"/>
<dbReference type="PaxDb" id="226186-BT_0652"/>
<dbReference type="EnsemblBacteria" id="AAO75759">
    <property type="protein sequence ID" value="AAO75759"/>
    <property type="gene ID" value="BT_0652"/>
</dbReference>
<dbReference type="GeneID" id="60926613"/>
<dbReference type="KEGG" id="bth:BT_0652"/>
<dbReference type="PATRIC" id="fig|226186.12.peg.663"/>
<dbReference type="eggNOG" id="COG0352">
    <property type="taxonomic scope" value="Bacteria"/>
</dbReference>
<dbReference type="HOGENOM" id="CLU_018272_3_2_10"/>
<dbReference type="InParanoid" id="Q8AA13"/>
<dbReference type="OrthoDB" id="9812206at2"/>
<dbReference type="UniPathway" id="UPA00060">
    <property type="reaction ID" value="UER00141"/>
</dbReference>
<dbReference type="Proteomes" id="UP000001414">
    <property type="component" value="Chromosome"/>
</dbReference>
<dbReference type="GO" id="GO:0005737">
    <property type="term" value="C:cytoplasm"/>
    <property type="evidence" value="ECO:0000318"/>
    <property type="project" value="GO_Central"/>
</dbReference>
<dbReference type="GO" id="GO:0000287">
    <property type="term" value="F:magnesium ion binding"/>
    <property type="evidence" value="ECO:0007669"/>
    <property type="project" value="UniProtKB-UniRule"/>
</dbReference>
<dbReference type="GO" id="GO:0004789">
    <property type="term" value="F:thiamine-phosphate diphosphorylase activity"/>
    <property type="evidence" value="ECO:0000318"/>
    <property type="project" value="GO_Central"/>
</dbReference>
<dbReference type="GO" id="GO:0009228">
    <property type="term" value="P:thiamine biosynthetic process"/>
    <property type="evidence" value="ECO:0000318"/>
    <property type="project" value="GO_Central"/>
</dbReference>
<dbReference type="GO" id="GO:0009229">
    <property type="term" value="P:thiamine diphosphate biosynthetic process"/>
    <property type="evidence" value="ECO:0007669"/>
    <property type="project" value="UniProtKB-UniRule"/>
</dbReference>
<dbReference type="CDD" id="cd00564">
    <property type="entry name" value="TMP_TenI"/>
    <property type="match status" value="1"/>
</dbReference>
<dbReference type="Gene3D" id="3.20.20.70">
    <property type="entry name" value="Aldolase class I"/>
    <property type="match status" value="1"/>
</dbReference>
<dbReference type="HAMAP" id="MF_00097">
    <property type="entry name" value="TMP_synthase"/>
    <property type="match status" value="1"/>
</dbReference>
<dbReference type="InterPro" id="IPR013785">
    <property type="entry name" value="Aldolase_TIM"/>
</dbReference>
<dbReference type="InterPro" id="IPR036206">
    <property type="entry name" value="ThiamineP_synth_sf"/>
</dbReference>
<dbReference type="InterPro" id="IPR022998">
    <property type="entry name" value="ThiamineP_synth_TenI"/>
</dbReference>
<dbReference type="InterPro" id="IPR034291">
    <property type="entry name" value="TMP_synthase"/>
</dbReference>
<dbReference type="NCBIfam" id="NF000736">
    <property type="entry name" value="PRK00043.2-3"/>
    <property type="match status" value="1"/>
</dbReference>
<dbReference type="NCBIfam" id="TIGR00693">
    <property type="entry name" value="thiE"/>
    <property type="match status" value="1"/>
</dbReference>
<dbReference type="PANTHER" id="PTHR20857">
    <property type="entry name" value="THIAMINE-PHOSPHATE PYROPHOSPHORYLASE"/>
    <property type="match status" value="1"/>
</dbReference>
<dbReference type="PANTHER" id="PTHR20857:SF15">
    <property type="entry name" value="THIAMINE-PHOSPHATE SYNTHASE"/>
    <property type="match status" value="1"/>
</dbReference>
<dbReference type="Pfam" id="PF02581">
    <property type="entry name" value="TMP-TENI"/>
    <property type="match status" value="1"/>
</dbReference>
<dbReference type="SUPFAM" id="SSF51391">
    <property type="entry name" value="Thiamin phosphate synthase"/>
    <property type="match status" value="1"/>
</dbReference>
<comment type="function">
    <text evidence="1">Condenses 4-methyl-5-(beta-hydroxyethyl)thiazole monophosphate (THZ-P) and 2-methyl-4-amino-5-hydroxymethyl pyrimidine pyrophosphate (HMP-PP) to form thiamine monophosphate (TMP).</text>
</comment>
<comment type="catalytic activity">
    <reaction evidence="1">
        <text>2-[(2R,5Z)-2-carboxy-4-methylthiazol-5(2H)-ylidene]ethyl phosphate + 4-amino-2-methyl-5-(diphosphooxymethyl)pyrimidine + 2 H(+) = thiamine phosphate + CO2 + diphosphate</text>
        <dbReference type="Rhea" id="RHEA:47844"/>
        <dbReference type="ChEBI" id="CHEBI:15378"/>
        <dbReference type="ChEBI" id="CHEBI:16526"/>
        <dbReference type="ChEBI" id="CHEBI:33019"/>
        <dbReference type="ChEBI" id="CHEBI:37575"/>
        <dbReference type="ChEBI" id="CHEBI:57841"/>
        <dbReference type="ChEBI" id="CHEBI:62899"/>
        <dbReference type="EC" id="2.5.1.3"/>
    </reaction>
</comment>
<comment type="catalytic activity">
    <reaction evidence="1">
        <text>2-(2-carboxy-4-methylthiazol-5-yl)ethyl phosphate + 4-amino-2-methyl-5-(diphosphooxymethyl)pyrimidine + 2 H(+) = thiamine phosphate + CO2 + diphosphate</text>
        <dbReference type="Rhea" id="RHEA:47848"/>
        <dbReference type="ChEBI" id="CHEBI:15378"/>
        <dbReference type="ChEBI" id="CHEBI:16526"/>
        <dbReference type="ChEBI" id="CHEBI:33019"/>
        <dbReference type="ChEBI" id="CHEBI:37575"/>
        <dbReference type="ChEBI" id="CHEBI:57841"/>
        <dbReference type="ChEBI" id="CHEBI:62890"/>
        <dbReference type="EC" id="2.5.1.3"/>
    </reaction>
</comment>
<comment type="catalytic activity">
    <reaction evidence="1">
        <text>4-methyl-5-(2-phosphooxyethyl)-thiazole + 4-amino-2-methyl-5-(diphosphooxymethyl)pyrimidine + H(+) = thiamine phosphate + diphosphate</text>
        <dbReference type="Rhea" id="RHEA:22328"/>
        <dbReference type="ChEBI" id="CHEBI:15378"/>
        <dbReference type="ChEBI" id="CHEBI:33019"/>
        <dbReference type="ChEBI" id="CHEBI:37575"/>
        <dbReference type="ChEBI" id="CHEBI:57841"/>
        <dbReference type="ChEBI" id="CHEBI:58296"/>
        <dbReference type="EC" id="2.5.1.3"/>
    </reaction>
</comment>
<comment type="cofactor">
    <cofactor evidence="1">
        <name>Mg(2+)</name>
        <dbReference type="ChEBI" id="CHEBI:18420"/>
    </cofactor>
    <text evidence="1">Binds 1 Mg(2+) ion per subunit.</text>
</comment>
<comment type="pathway">
    <text evidence="1">Cofactor biosynthesis; thiamine diphosphate biosynthesis; thiamine phosphate from 4-amino-2-methyl-5-diphosphomethylpyrimidine and 4-methyl-5-(2-phosphoethyl)-thiazole: step 1/1.</text>
</comment>
<comment type="similarity">
    <text evidence="1">Belongs to the thiamine-phosphate synthase family.</text>
</comment>
<organism>
    <name type="scientific">Bacteroides thetaiotaomicron (strain ATCC 29148 / DSM 2079 / JCM 5827 / CCUG 10774 / NCTC 10582 / VPI-5482 / E50)</name>
    <dbReference type="NCBI Taxonomy" id="226186"/>
    <lineage>
        <taxon>Bacteria</taxon>
        <taxon>Pseudomonadati</taxon>
        <taxon>Bacteroidota</taxon>
        <taxon>Bacteroidia</taxon>
        <taxon>Bacteroidales</taxon>
        <taxon>Bacteroidaceae</taxon>
        <taxon>Bacteroides</taxon>
    </lineage>
</organism>
<gene>
    <name evidence="1" type="primary">thiE</name>
    <name type="ordered locus">BT_0652</name>
</gene>
<keyword id="KW-0460">Magnesium</keyword>
<keyword id="KW-0479">Metal-binding</keyword>
<keyword id="KW-1185">Reference proteome</keyword>
<keyword id="KW-0784">Thiamine biosynthesis</keyword>
<keyword id="KW-0808">Transferase</keyword>
<sequence>MVSLQFITHQTDRYTYFESALMALEGGCKWIQLRMKEAPCEEVEAVALQLKPLCKEKEAILLLDDHVELAKKLEVDGVHLGKKDMPIDQARQLLGEAFIIGGTANTFEDVVQHYRAGADYLGIGPFRFTTTKKNLSPVLGLEGYTAILSQMKEANIELPVVAIGGITREDIPAILETGVNGIALSGTILRAEDPAAETRKILNMKRIIK</sequence>
<evidence type="ECO:0000255" key="1">
    <source>
        <dbReference type="HAMAP-Rule" id="MF_00097"/>
    </source>
</evidence>